<name>CYB_TRIAI</name>
<dbReference type="EMBL" id="U34856">
    <property type="protein sequence ID" value="AAC52565.1"/>
    <property type="molecule type" value="Genomic_DNA"/>
</dbReference>
<dbReference type="SMR" id="Q35968"/>
<dbReference type="GO" id="GO:0005743">
    <property type="term" value="C:mitochondrial inner membrane"/>
    <property type="evidence" value="ECO:0007669"/>
    <property type="project" value="UniProtKB-SubCell"/>
</dbReference>
<dbReference type="GO" id="GO:0045275">
    <property type="term" value="C:respiratory chain complex III"/>
    <property type="evidence" value="ECO:0007669"/>
    <property type="project" value="InterPro"/>
</dbReference>
<dbReference type="GO" id="GO:0046872">
    <property type="term" value="F:metal ion binding"/>
    <property type="evidence" value="ECO:0007669"/>
    <property type="project" value="UniProtKB-KW"/>
</dbReference>
<dbReference type="GO" id="GO:0008121">
    <property type="term" value="F:ubiquinol-cytochrome-c reductase activity"/>
    <property type="evidence" value="ECO:0007669"/>
    <property type="project" value="InterPro"/>
</dbReference>
<dbReference type="GO" id="GO:0006122">
    <property type="term" value="P:mitochondrial electron transport, ubiquinol to cytochrome c"/>
    <property type="evidence" value="ECO:0007669"/>
    <property type="project" value="TreeGrafter"/>
</dbReference>
<dbReference type="CDD" id="cd00290">
    <property type="entry name" value="cytochrome_b_C"/>
    <property type="match status" value="1"/>
</dbReference>
<dbReference type="CDD" id="cd00284">
    <property type="entry name" value="Cytochrome_b_N"/>
    <property type="match status" value="1"/>
</dbReference>
<dbReference type="FunFam" id="1.20.810.10:FF:000002">
    <property type="entry name" value="Cytochrome b"/>
    <property type="match status" value="1"/>
</dbReference>
<dbReference type="Gene3D" id="1.20.810.10">
    <property type="entry name" value="Cytochrome Bc1 Complex, Chain C"/>
    <property type="match status" value="1"/>
</dbReference>
<dbReference type="InterPro" id="IPR005798">
    <property type="entry name" value="Cyt_b/b6_C"/>
</dbReference>
<dbReference type="InterPro" id="IPR036150">
    <property type="entry name" value="Cyt_b/b6_C_sf"/>
</dbReference>
<dbReference type="InterPro" id="IPR005797">
    <property type="entry name" value="Cyt_b/b6_N"/>
</dbReference>
<dbReference type="InterPro" id="IPR027387">
    <property type="entry name" value="Cytb/b6-like_sf"/>
</dbReference>
<dbReference type="InterPro" id="IPR030689">
    <property type="entry name" value="Cytochrome_b"/>
</dbReference>
<dbReference type="InterPro" id="IPR048260">
    <property type="entry name" value="Cytochrome_b_C_euk/bac"/>
</dbReference>
<dbReference type="InterPro" id="IPR048259">
    <property type="entry name" value="Cytochrome_b_N_euk/bac"/>
</dbReference>
<dbReference type="InterPro" id="IPR016174">
    <property type="entry name" value="Di-haem_cyt_TM"/>
</dbReference>
<dbReference type="PANTHER" id="PTHR19271">
    <property type="entry name" value="CYTOCHROME B"/>
    <property type="match status" value="1"/>
</dbReference>
<dbReference type="PANTHER" id="PTHR19271:SF16">
    <property type="entry name" value="CYTOCHROME B"/>
    <property type="match status" value="1"/>
</dbReference>
<dbReference type="Pfam" id="PF00032">
    <property type="entry name" value="Cytochrom_B_C"/>
    <property type="match status" value="1"/>
</dbReference>
<dbReference type="Pfam" id="PF00033">
    <property type="entry name" value="Cytochrome_B"/>
    <property type="match status" value="1"/>
</dbReference>
<dbReference type="PIRSF" id="PIRSF038885">
    <property type="entry name" value="COB"/>
    <property type="match status" value="1"/>
</dbReference>
<dbReference type="SUPFAM" id="SSF81648">
    <property type="entry name" value="a domain/subunit of cytochrome bc1 complex (Ubiquinol-cytochrome c reductase)"/>
    <property type="match status" value="1"/>
</dbReference>
<dbReference type="SUPFAM" id="SSF81342">
    <property type="entry name" value="Transmembrane di-heme cytochromes"/>
    <property type="match status" value="1"/>
</dbReference>
<dbReference type="PROSITE" id="PS51003">
    <property type="entry name" value="CYTB_CTER"/>
    <property type="match status" value="1"/>
</dbReference>
<dbReference type="PROSITE" id="PS51002">
    <property type="entry name" value="CYTB_NTER"/>
    <property type="match status" value="1"/>
</dbReference>
<comment type="function">
    <text evidence="2">Component of the ubiquinol-cytochrome c reductase complex (complex III or cytochrome b-c1 complex) that is part of the mitochondrial respiratory chain. The b-c1 complex mediates electron transfer from ubiquinol to cytochrome c. Contributes to the generation of a proton gradient across the mitochondrial membrane that is then used for ATP synthesis.</text>
</comment>
<comment type="cofactor">
    <cofactor evidence="2">
        <name>heme b</name>
        <dbReference type="ChEBI" id="CHEBI:60344"/>
    </cofactor>
    <text evidence="2">Binds 2 heme b groups non-covalently.</text>
</comment>
<comment type="subunit">
    <text evidence="2">The cytochrome bc1 complex contains 11 subunits: 3 respiratory subunits (MT-CYB, CYC1 and UQCRFS1), 2 core proteins (UQCRC1 and UQCRC2) and 6 low-molecular weight proteins (UQCRH/QCR6, UQCRB/QCR7, UQCRQ/QCR8, UQCR10/QCR9, UQCR11/QCR10 and a cleavage product of UQCRFS1). This cytochrome bc1 complex then forms a dimer.</text>
</comment>
<comment type="subcellular location">
    <subcellularLocation>
        <location evidence="2">Mitochondrion inner membrane</location>
        <topology evidence="2">Multi-pass membrane protein</topology>
    </subcellularLocation>
</comment>
<comment type="miscellaneous">
    <text evidence="1">Heme 1 (or BL or b562) is low-potential and absorbs at about 562 nm, and heme 2 (or BH or b566) is high-potential and absorbs at about 566 nm.</text>
</comment>
<comment type="similarity">
    <text evidence="3 4">Belongs to the cytochrome b family.</text>
</comment>
<comment type="caution">
    <text evidence="2">The full-length protein contains only eight transmembrane helices, not nine as predicted by bioinformatics tools.</text>
</comment>
<organism>
    <name type="scientific">Trinomys albispinus</name>
    <name type="common">White-spined Atlantic spiny rat</name>
    <name type="synonym">Proechimys albispinus</name>
    <dbReference type="NCBI Taxonomy" id="109335"/>
    <lineage>
        <taxon>Eukaryota</taxon>
        <taxon>Metazoa</taxon>
        <taxon>Chordata</taxon>
        <taxon>Craniata</taxon>
        <taxon>Vertebrata</taxon>
        <taxon>Euteleostomi</taxon>
        <taxon>Mammalia</taxon>
        <taxon>Eutheria</taxon>
        <taxon>Euarchontoglires</taxon>
        <taxon>Glires</taxon>
        <taxon>Rodentia</taxon>
        <taxon>Hystricomorpha</taxon>
        <taxon>Echimyidae</taxon>
        <taxon>Trinomys</taxon>
    </lineage>
</organism>
<geneLocation type="mitochondrion"/>
<accession>Q35968</accession>
<keyword id="KW-0249">Electron transport</keyword>
<keyword id="KW-0349">Heme</keyword>
<keyword id="KW-0408">Iron</keyword>
<keyword id="KW-0472">Membrane</keyword>
<keyword id="KW-0479">Metal-binding</keyword>
<keyword id="KW-0496">Mitochondrion</keyword>
<keyword id="KW-0999">Mitochondrion inner membrane</keyword>
<keyword id="KW-0679">Respiratory chain</keyword>
<keyword id="KW-0812">Transmembrane</keyword>
<keyword id="KW-1133">Transmembrane helix</keyword>
<keyword id="KW-0813">Transport</keyword>
<keyword id="KW-0830">Ubiquinone</keyword>
<evidence type="ECO:0000250" key="1"/>
<evidence type="ECO:0000250" key="2">
    <source>
        <dbReference type="UniProtKB" id="P00157"/>
    </source>
</evidence>
<evidence type="ECO:0000255" key="3">
    <source>
        <dbReference type="PROSITE-ProRule" id="PRU00967"/>
    </source>
</evidence>
<evidence type="ECO:0000255" key="4">
    <source>
        <dbReference type="PROSITE-ProRule" id="PRU00968"/>
    </source>
</evidence>
<proteinExistence type="inferred from homology"/>
<sequence length="379" mass="43135">MTNIRKSHPLIKIINHSFIDLPTPSNISAWWNFGSLLGVCLTLQIITGLFLAMHYTADTMTAFSSVTHICRDVNYGWMIRYAHANGASMFFILLYFHIGRGIYYGSYTFMETWNIGVILLFLVMATAFMGYVLPWGQMSFWGATVITNLLSAIPYIGPTLVEWIWGGFSVDKATLTRFFAFHFILPFIITAMVMIHLLFLHETGSNNPSGLNSDSDKIPFHPYYTIKDILGLLLMLLVLLMLILFSPDLLGDPDNYTPANPLNTPPHIKPEWYFLFAYAILRSIPNKLGGVLALAFSILILMLFPTLHTSKQRSMSFRPMSQCLLWILVANLIILTWIGGQPVEYPFITIGQLASMSYFCIILILMPMMSFMENKFLKW</sequence>
<feature type="chain" id="PRO_0000255150" description="Cytochrome b">
    <location>
        <begin position="1"/>
        <end position="379"/>
    </location>
</feature>
<feature type="transmembrane region" description="Helical" evidence="2">
    <location>
        <begin position="33"/>
        <end position="53"/>
    </location>
</feature>
<feature type="transmembrane region" description="Helical" evidence="2">
    <location>
        <begin position="77"/>
        <end position="98"/>
    </location>
</feature>
<feature type="transmembrane region" description="Helical" evidence="2">
    <location>
        <begin position="113"/>
        <end position="133"/>
    </location>
</feature>
<feature type="transmembrane region" description="Helical" evidence="2">
    <location>
        <begin position="178"/>
        <end position="198"/>
    </location>
</feature>
<feature type="transmembrane region" description="Helical" evidence="2">
    <location>
        <begin position="226"/>
        <end position="246"/>
    </location>
</feature>
<feature type="transmembrane region" description="Helical" evidence="2">
    <location>
        <begin position="288"/>
        <end position="308"/>
    </location>
</feature>
<feature type="transmembrane region" description="Helical" evidence="2">
    <location>
        <begin position="320"/>
        <end position="340"/>
    </location>
</feature>
<feature type="transmembrane region" description="Helical" evidence="2">
    <location>
        <begin position="347"/>
        <end position="367"/>
    </location>
</feature>
<feature type="binding site" description="axial binding residue" evidence="2">
    <location>
        <position position="83"/>
    </location>
    <ligand>
        <name>heme b</name>
        <dbReference type="ChEBI" id="CHEBI:60344"/>
        <label>b562</label>
    </ligand>
    <ligandPart>
        <name>Fe</name>
        <dbReference type="ChEBI" id="CHEBI:18248"/>
    </ligandPart>
</feature>
<feature type="binding site" description="axial binding residue" evidence="2">
    <location>
        <position position="97"/>
    </location>
    <ligand>
        <name>heme b</name>
        <dbReference type="ChEBI" id="CHEBI:60344"/>
        <label>b566</label>
    </ligand>
    <ligandPart>
        <name>Fe</name>
        <dbReference type="ChEBI" id="CHEBI:18248"/>
    </ligandPart>
</feature>
<feature type="binding site" description="axial binding residue" evidence="2">
    <location>
        <position position="182"/>
    </location>
    <ligand>
        <name>heme b</name>
        <dbReference type="ChEBI" id="CHEBI:60344"/>
        <label>b562</label>
    </ligand>
    <ligandPart>
        <name>Fe</name>
        <dbReference type="ChEBI" id="CHEBI:18248"/>
    </ligandPart>
</feature>
<feature type="binding site" description="axial binding residue" evidence="2">
    <location>
        <position position="196"/>
    </location>
    <ligand>
        <name>heme b</name>
        <dbReference type="ChEBI" id="CHEBI:60344"/>
        <label>b566</label>
    </ligand>
    <ligandPart>
        <name>Fe</name>
        <dbReference type="ChEBI" id="CHEBI:18248"/>
    </ligandPart>
</feature>
<feature type="binding site" evidence="2">
    <location>
        <position position="201"/>
    </location>
    <ligand>
        <name>a ubiquinone</name>
        <dbReference type="ChEBI" id="CHEBI:16389"/>
    </ligand>
</feature>
<gene>
    <name type="primary">MT-CYB</name>
    <name type="synonym">COB</name>
    <name type="synonym">CYTB</name>
    <name type="synonym">MTCYB</name>
</gene>
<protein>
    <recommendedName>
        <fullName>Cytochrome b</fullName>
    </recommendedName>
    <alternativeName>
        <fullName>Complex III subunit 3</fullName>
    </alternativeName>
    <alternativeName>
        <fullName>Complex III subunit III</fullName>
    </alternativeName>
    <alternativeName>
        <fullName>Cytochrome b-c1 complex subunit 3</fullName>
    </alternativeName>
    <alternativeName>
        <fullName>Ubiquinol-cytochrome-c reductase complex cytochrome b subunit</fullName>
    </alternativeName>
</protein>
<reference key="1">
    <citation type="journal article" date="1996" name="Mol. Phylogenet. Evol.">
        <title>The simultaneous diversification of South American echimyid rodents (Hystricognathi) based on complete cytochrome b sequences.</title>
        <authorList>
            <person name="Lara M.C."/>
            <person name="Patton J.L."/>
            <person name="da Silva M.N.F."/>
        </authorList>
    </citation>
    <scope>NUCLEOTIDE SEQUENCE [GENOMIC DNA]</scope>
</reference>